<protein>
    <recommendedName>
        <fullName evidence="1">Probable Fe(2+)-trafficking protein</fullName>
    </recommendedName>
</protein>
<dbReference type="EMBL" id="CP000075">
    <property type="protein sequence ID" value="AAY39929.1"/>
    <property type="molecule type" value="Genomic_DNA"/>
</dbReference>
<dbReference type="RefSeq" id="WP_002555777.1">
    <property type="nucleotide sequence ID" value="NC_007005.1"/>
</dbReference>
<dbReference type="RefSeq" id="YP_237967.1">
    <property type="nucleotide sequence ID" value="NC_007005.1"/>
</dbReference>
<dbReference type="SMR" id="Q4ZLP3"/>
<dbReference type="STRING" id="205918.Psyr_4902"/>
<dbReference type="KEGG" id="psb:Psyr_4902"/>
<dbReference type="PATRIC" id="fig|205918.7.peg.5068"/>
<dbReference type="eggNOG" id="COG2924">
    <property type="taxonomic scope" value="Bacteria"/>
</dbReference>
<dbReference type="HOGENOM" id="CLU_170994_0_0_6"/>
<dbReference type="OrthoDB" id="9804318at2"/>
<dbReference type="Proteomes" id="UP000000426">
    <property type="component" value="Chromosome"/>
</dbReference>
<dbReference type="GO" id="GO:0005829">
    <property type="term" value="C:cytosol"/>
    <property type="evidence" value="ECO:0007669"/>
    <property type="project" value="TreeGrafter"/>
</dbReference>
<dbReference type="GO" id="GO:0005506">
    <property type="term" value="F:iron ion binding"/>
    <property type="evidence" value="ECO:0007669"/>
    <property type="project" value="UniProtKB-UniRule"/>
</dbReference>
<dbReference type="GO" id="GO:0034599">
    <property type="term" value="P:cellular response to oxidative stress"/>
    <property type="evidence" value="ECO:0007669"/>
    <property type="project" value="TreeGrafter"/>
</dbReference>
<dbReference type="FunFam" id="1.10.3880.10:FF:000001">
    <property type="entry name" value="Probable Fe(2+)-trafficking protein"/>
    <property type="match status" value="1"/>
</dbReference>
<dbReference type="Gene3D" id="1.10.3880.10">
    <property type="entry name" value="Fe(II) trafficking protein YggX"/>
    <property type="match status" value="1"/>
</dbReference>
<dbReference type="HAMAP" id="MF_00686">
    <property type="entry name" value="Fe_traffic_YggX"/>
    <property type="match status" value="1"/>
</dbReference>
<dbReference type="InterPro" id="IPR007457">
    <property type="entry name" value="Fe_traffick_prot_YggX"/>
</dbReference>
<dbReference type="InterPro" id="IPR036766">
    <property type="entry name" value="Fe_traffick_prot_YggX_sf"/>
</dbReference>
<dbReference type="NCBIfam" id="NF003817">
    <property type="entry name" value="PRK05408.1"/>
    <property type="match status" value="1"/>
</dbReference>
<dbReference type="PANTHER" id="PTHR36965">
    <property type="entry name" value="FE(2+)-TRAFFICKING PROTEIN-RELATED"/>
    <property type="match status" value="1"/>
</dbReference>
<dbReference type="PANTHER" id="PTHR36965:SF1">
    <property type="entry name" value="FE(2+)-TRAFFICKING PROTEIN-RELATED"/>
    <property type="match status" value="1"/>
</dbReference>
<dbReference type="Pfam" id="PF04362">
    <property type="entry name" value="Iron_traffic"/>
    <property type="match status" value="1"/>
</dbReference>
<dbReference type="PIRSF" id="PIRSF029827">
    <property type="entry name" value="Fe_traffic_YggX"/>
    <property type="match status" value="1"/>
</dbReference>
<dbReference type="SUPFAM" id="SSF111148">
    <property type="entry name" value="YggX-like"/>
    <property type="match status" value="1"/>
</dbReference>
<proteinExistence type="inferred from homology"/>
<sequence length="90" mass="10621">MTRTVMCRKYKEELPGLERAPYPGAKGEDIFNHVSQKAWADWQKHQTLLINERRLNMMNAEDRKFLQTEMDKFLSGEEYAQAEGYVPPEK</sequence>
<gene>
    <name type="ordered locus">Psyr_4902</name>
</gene>
<feature type="chain" id="PRO_0000246109" description="Probable Fe(2+)-trafficking protein">
    <location>
        <begin position="1"/>
        <end position="90"/>
    </location>
</feature>
<comment type="function">
    <text evidence="1">Could be a mediator in iron transactions between iron acquisition and iron-requiring processes, such as synthesis and/or repair of Fe-S clusters in biosynthetic enzymes.</text>
</comment>
<comment type="similarity">
    <text evidence="1">Belongs to the Fe(2+)-trafficking protein family.</text>
</comment>
<name>FETP_PSEU2</name>
<keyword id="KW-0408">Iron</keyword>
<accession>Q4ZLP3</accession>
<reference key="1">
    <citation type="journal article" date="2005" name="Proc. Natl. Acad. Sci. U.S.A.">
        <title>Comparison of the complete genome sequences of Pseudomonas syringae pv. syringae B728a and pv. tomato DC3000.</title>
        <authorList>
            <person name="Feil H."/>
            <person name="Feil W.S."/>
            <person name="Chain P."/>
            <person name="Larimer F."/>
            <person name="Dibartolo G."/>
            <person name="Copeland A."/>
            <person name="Lykidis A."/>
            <person name="Trong S."/>
            <person name="Nolan M."/>
            <person name="Goltsman E."/>
            <person name="Thiel J."/>
            <person name="Malfatti S."/>
            <person name="Loper J.E."/>
            <person name="Lapidus A."/>
            <person name="Detter J.C."/>
            <person name="Land M."/>
            <person name="Richardson P.M."/>
            <person name="Kyrpides N.C."/>
            <person name="Ivanova N."/>
            <person name="Lindow S.E."/>
        </authorList>
    </citation>
    <scope>NUCLEOTIDE SEQUENCE [LARGE SCALE GENOMIC DNA]</scope>
    <source>
        <strain>B728a</strain>
    </source>
</reference>
<evidence type="ECO:0000255" key="1">
    <source>
        <dbReference type="HAMAP-Rule" id="MF_00686"/>
    </source>
</evidence>
<organism>
    <name type="scientific">Pseudomonas syringae pv. syringae (strain B728a)</name>
    <dbReference type="NCBI Taxonomy" id="205918"/>
    <lineage>
        <taxon>Bacteria</taxon>
        <taxon>Pseudomonadati</taxon>
        <taxon>Pseudomonadota</taxon>
        <taxon>Gammaproteobacteria</taxon>
        <taxon>Pseudomonadales</taxon>
        <taxon>Pseudomonadaceae</taxon>
        <taxon>Pseudomonas</taxon>
        <taxon>Pseudomonas syringae</taxon>
    </lineage>
</organism>